<protein>
    <recommendedName>
        <fullName evidence="1">N-succinylarginine dihydrolase 2</fullName>
        <ecNumber evidence="1">3.5.3.23</ecNumber>
    </recommendedName>
</protein>
<name>ASTB2_CAUVC</name>
<gene>
    <name evidence="1" type="primary">astB2</name>
    <name type="ordered locus">CC_1608</name>
</gene>
<reference key="1">
    <citation type="journal article" date="2001" name="Proc. Natl. Acad. Sci. U.S.A.">
        <title>Complete genome sequence of Caulobacter crescentus.</title>
        <authorList>
            <person name="Nierman W.C."/>
            <person name="Feldblyum T.V."/>
            <person name="Laub M.T."/>
            <person name="Paulsen I.T."/>
            <person name="Nelson K.E."/>
            <person name="Eisen J.A."/>
            <person name="Heidelberg J.F."/>
            <person name="Alley M.R.K."/>
            <person name="Ohta N."/>
            <person name="Maddock J.R."/>
            <person name="Potocka I."/>
            <person name="Nelson W.C."/>
            <person name="Newton A."/>
            <person name="Stephens C."/>
            <person name="Phadke N.D."/>
            <person name="Ely B."/>
            <person name="DeBoy R.T."/>
            <person name="Dodson R.J."/>
            <person name="Durkin A.S."/>
            <person name="Gwinn M.L."/>
            <person name="Haft D.H."/>
            <person name="Kolonay J.F."/>
            <person name="Smit J."/>
            <person name="Craven M.B."/>
            <person name="Khouri H.M."/>
            <person name="Shetty J."/>
            <person name="Berry K.J."/>
            <person name="Utterback T.R."/>
            <person name="Tran K."/>
            <person name="Wolf A.M."/>
            <person name="Vamathevan J.J."/>
            <person name="Ermolaeva M.D."/>
            <person name="White O."/>
            <person name="Salzberg S.L."/>
            <person name="Venter J.C."/>
            <person name="Shapiro L."/>
            <person name="Fraser C.M."/>
        </authorList>
    </citation>
    <scope>NUCLEOTIDE SEQUENCE [LARGE SCALE GENOMIC DNA]</scope>
    <source>
        <strain>ATCC 19089 / CIP 103742 / CB 15</strain>
    </source>
</reference>
<dbReference type="EC" id="3.5.3.23" evidence="1"/>
<dbReference type="EMBL" id="AE005673">
    <property type="protein sequence ID" value="AAK23587.1"/>
    <property type="molecule type" value="Genomic_DNA"/>
</dbReference>
<dbReference type="PIR" id="G87448">
    <property type="entry name" value="G87448"/>
</dbReference>
<dbReference type="RefSeq" id="NP_420419.1">
    <property type="nucleotide sequence ID" value="NC_002696.2"/>
</dbReference>
<dbReference type="RefSeq" id="WP_010919482.1">
    <property type="nucleotide sequence ID" value="NC_002696.2"/>
</dbReference>
<dbReference type="SMR" id="Q9A7W1"/>
<dbReference type="STRING" id="190650.CC_1608"/>
<dbReference type="EnsemblBacteria" id="AAK23587">
    <property type="protein sequence ID" value="AAK23587"/>
    <property type="gene ID" value="CC_1608"/>
</dbReference>
<dbReference type="KEGG" id="ccr:CC_1608"/>
<dbReference type="PATRIC" id="fig|190650.5.peg.1635"/>
<dbReference type="eggNOG" id="COG3724">
    <property type="taxonomic scope" value="Bacteria"/>
</dbReference>
<dbReference type="HOGENOM" id="CLU_053835_0_0_5"/>
<dbReference type="BioCyc" id="CAULO:CC1608-MONOMER"/>
<dbReference type="UniPathway" id="UPA00185">
    <property type="reaction ID" value="UER00280"/>
</dbReference>
<dbReference type="Proteomes" id="UP000001816">
    <property type="component" value="Chromosome"/>
</dbReference>
<dbReference type="GO" id="GO:0009015">
    <property type="term" value="F:N-succinylarginine dihydrolase activity"/>
    <property type="evidence" value="ECO:0007669"/>
    <property type="project" value="UniProtKB-UniRule"/>
</dbReference>
<dbReference type="GO" id="GO:0019544">
    <property type="term" value="P:arginine catabolic process to glutamate"/>
    <property type="evidence" value="ECO:0007669"/>
    <property type="project" value="UniProtKB-UniRule"/>
</dbReference>
<dbReference type="GO" id="GO:0019545">
    <property type="term" value="P:arginine catabolic process to succinate"/>
    <property type="evidence" value="ECO:0007669"/>
    <property type="project" value="UniProtKB-UniRule"/>
</dbReference>
<dbReference type="Gene3D" id="3.75.10.20">
    <property type="entry name" value="Succinylarginine dihydrolase"/>
    <property type="match status" value="1"/>
</dbReference>
<dbReference type="HAMAP" id="MF_01172">
    <property type="entry name" value="AstB"/>
    <property type="match status" value="1"/>
</dbReference>
<dbReference type="InterPro" id="IPR037031">
    <property type="entry name" value="AstB_sf"/>
</dbReference>
<dbReference type="InterPro" id="IPR007079">
    <property type="entry name" value="SuccinylArg_d-Hdrlase_AstB"/>
</dbReference>
<dbReference type="NCBIfam" id="TIGR03241">
    <property type="entry name" value="arg_catab_astB"/>
    <property type="match status" value="1"/>
</dbReference>
<dbReference type="NCBIfam" id="NF009789">
    <property type="entry name" value="PRK13281.1"/>
    <property type="match status" value="1"/>
</dbReference>
<dbReference type="PANTHER" id="PTHR30420">
    <property type="entry name" value="N-SUCCINYLARGININE DIHYDROLASE"/>
    <property type="match status" value="1"/>
</dbReference>
<dbReference type="PANTHER" id="PTHR30420:SF2">
    <property type="entry name" value="N-SUCCINYLARGININE DIHYDROLASE"/>
    <property type="match status" value="1"/>
</dbReference>
<dbReference type="Pfam" id="PF04996">
    <property type="entry name" value="AstB"/>
    <property type="match status" value="1"/>
</dbReference>
<dbReference type="SUPFAM" id="SSF55909">
    <property type="entry name" value="Pentein"/>
    <property type="match status" value="1"/>
</dbReference>
<evidence type="ECO:0000255" key="1">
    <source>
        <dbReference type="HAMAP-Rule" id="MF_01172"/>
    </source>
</evidence>
<sequence>MISAFEANCDGLVGPTHSYVGLSPGNLASTRNAGEVSNPRGAALEGLAKMRRLADLGLPQFVLPPHERPAVSLLRQLGFSGPDEIVLTSAWRDAPALAAAACSASPMWAANAATVTPSADAADGRVHFTPANLLTNLHRSLEGRQTARSLRRLFADETRFAVHDPLPAQPHFADEGAANHVRLCAEHGGPGVNLFVWGREAWSHWDGRFPARQTKEAFEAIQRRHGAARAVFPQQGKAAIEGGAFHNDVVCVGTRECLFFHERAFEDRATMAREVRAAASGLFEPAFVEVTEADLPMADLVASYLFNSQLLVVPGEDRLVLLAPVETRDNPRAYAVAESLATSNGPIGRVEYVDVRQSMRNGGGPACLRLRVVLTEAELAAANPAQRFTADLQDALADWITRRYRDRLSPADLADAKLLTESREALDELTQILGLGDDFYPFQRTA</sequence>
<accession>Q9A7W1</accession>
<feature type="chain" id="PRO_0000262346" description="N-succinylarginine dihydrolase 2">
    <location>
        <begin position="1"/>
        <end position="446"/>
    </location>
</feature>
<feature type="active site" evidence="1">
    <location>
        <position position="175"/>
    </location>
</feature>
<feature type="active site" evidence="1">
    <location>
        <position position="246"/>
    </location>
</feature>
<feature type="active site" description="Nucleophile" evidence="1">
    <location>
        <position position="367"/>
    </location>
</feature>
<feature type="binding site" evidence="1">
    <location>
        <begin position="20"/>
        <end position="29"/>
    </location>
    <ligand>
        <name>substrate</name>
    </ligand>
</feature>
<feature type="binding site" evidence="1">
    <location>
        <position position="111"/>
    </location>
    <ligand>
        <name>substrate</name>
    </ligand>
</feature>
<feature type="binding site" evidence="1">
    <location>
        <begin position="138"/>
        <end position="139"/>
    </location>
    <ligand>
        <name>substrate</name>
    </ligand>
</feature>
<feature type="binding site" evidence="1">
    <location>
        <position position="212"/>
    </location>
    <ligand>
        <name>substrate</name>
    </ligand>
</feature>
<feature type="binding site" evidence="1">
    <location>
        <position position="248"/>
    </location>
    <ligand>
        <name>substrate</name>
    </ligand>
</feature>
<feature type="binding site" evidence="1">
    <location>
        <position position="361"/>
    </location>
    <ligand>
        <name>substrate</name>
    </ligand>
</feature>
<proteinExistence type="inferred from homology"/>
<keyword id="KW-0056">Arginine metabolism</keyword>
<keyword id="KW-0378">Hydrolase</keyword>
<keyword id="KW-1185">Reference proteome</keyword>
<organism>
    <name type="scientific">Caulobacter vibrioides (strain ATCC 19089 / CIP 103742 / CB 15)</name>
    <name type="common">Caulobacter crescentus</name>
    <dbReference type="NCBI Taxonomy" id="190650"/>
    <lineage>
        <taxon>Bacteria</taxon>
        <taxon>Pseudomonadati</taxon>
        <taxon>Pseudomonadota</taxon>
        <taxon>Alphaproteobacteria</taxon>
        <taxon>Caulobacterales</taxon>
        <taxon>Caulobacteraceae</taxon>
        <taxon>Caulobacter</taxon>
    </lineage>
</organism>
<comment type="function">
    <text evidence="1">Catalyzes the hydrolysis of N(2)-succinylarginine into N(2)-succinylornithine, ammonia and CO(2).</text>
</comment>
<comment type="catalytic activity">
    <reaction evidence="1">
        <text>N(2)-succinyl-L-arginine + 2 H2O + 2 H(+) = N(2)-succinyl-L-ornithine + 2 NH4(+) + CO2</text>
        <dbReference type="Rhea" id="RHEA:19533"/>
        <dbReference type="ChEBI" id="CHEBI:15377"/>
        <dbReference type="ChEBI" id="CHEBI:15378"/>
        <dbReference type="ChEBI" id="CHEBI:16526"/>
        <dbReference type="ChEBI" id="CHEBI:28938"/>
        <dbReference type="ChEBI" id="CHEBI:58241"/>
        <dbReference type="ChEBI" id="CHEBI:58514"/>
        <dbReference type="EC" id="3.5.3.23"/>
    </reaction>
</comment>
<comment type="pathway">
    <text evidence="1">Amino-acid degradation; L-arginine degradation via AST pathway; L-glutamate and succinate from L-arginine: step 2/5.</text>
</comment>
<comment type="subunit">
    <text evidence="1">Homodimer.</text>
</comment>
<comment type="similarity">
    <text evidence="1">Belongs to the succinylarginine dihydrolase family.</text>
</comment>